<protein>
    <recommendedName>
        <fullName>Beta-crystallin A2</fullName>
    </recommendedName>
    <alternativeName>
        <fullName>Beta-A2 crystallin</fullName>
    </alternativeName>
</protein>
<keyword id="KW-0273">Eye lens protein</keyword>
<keyword id="KW-1185">Reference proteome</keyword>
<keyword id="KW-0677">Repeat</keyword>
<organism>
    <name type="scientific">Gallus gallus</name>
    <name type="common">Chicken</name>
    <dbReference type="NCBI Taxonomy" id="9031"/>
    <lineage>
        <taxon>Eukaryota</taxon>
        <taxon>Metazoa</taxon>
        <taxon>Chordata</taxon>
        <taxon>Craniata</taxon>
        <taxon>Vertebrata</taxon>
        <taxon>Euteleostomi</taxon>
        <taxon>Archelosauria</taxon>
        <taxon>Archosauria</taxon>
        <taxon>Dinosauria</taxon>
        <taxon>Saurischia</taxon>
        <taxon>Theropoda</taxon>
        <taxon>Coelurosauria</taxon>
        <taxon>Aves</taxon>
        <taxon>Neognathae</taxon>
        <taxon>Galloanserae</taxon>
        <taxon>Galliformes</taxon>
        <taxon>Phasianidae</taxon>
        <taxon>Phasianinae</taxon>
        <taxon>Gallus</taxon>
    </lineage>
</organism>
<feature type="chain" id="PRO_0000057541" description="Beta-crystallin A2">
    <location>
        <begin position="1"/>
        <end position="196"/>
    </location>
</feature>
<feature type="domain" description="Beta/gamma crystallin 'Greek key' 1" evidence="2">
    <location>
        <begin position="12"/>
        <end position="51"/>
    </location>
</feature>
<feature type="domain" description="Beta/gamma crystallin 'Greek key' 2" evidence="2">
    <location>
        <begin position="52"/>
        <end position="98"/>
    </location>
</feature>
<feature type="domain" description="Beta/gamma crystallin 'Greek key' 3" evidence="2">
    <location>
        <begin position="105"/>
        <end position="146"/>
    </location>
</feature>
<feature type="domain" description="Beta/gamma crystallin 'Greek key' 4" evidence="2">
    <location>
        <begin position="147"/>
        <end position="195"/>
    </location>
</feature>
<feature type="region of interest" description="N-terminal arm">
    <location>
        <begin position="1"/>
        <end position="11"/>
    </location>
</feature>
<feature type="region of interest" description="Connecting peptide">
    <location>
        <begin position="99"/>
        <end position="104"/>
    </location>
</feature>
<comment type="function">
    <text>Crystallins are the dominant structural components of the vertebrate eye lens.</text>
</comment>
<comment type="subunit">
    <text evidence="1">Homo/heterodimer, or complexes of higher-order. The structure of beta-crystallin oligomers seems to be stabilized through interactions between the N-terminal arms (By similarity).</text>
</comment>
<comment type="domain">
    <text>Has a two-domain beta-structure, folded into four very similar Greek key motifs.</text>
</comment>
<comment type="similarity">
    <text evidence="3">Belongs to the beta/gamma-crystallin family.</text>
</comment>
<dbReference type="EMBL" id="U28145">
    <property type="protein sequence ID" value="AAB08774.1"/>
    <property type="molecule type" value="mRNA"/>
</dbReference>
<dbReference type="RefSeq" id="NP_989510.1">
    <property type="nucleotide sequence ID" value="NM_204179.1"/>
</dbReference>
<dbReference type="RefSeq" id="XP_025007837.2">
    <property type="nucleotide sequence ID" value="XM_025152069.3"/>
</dbReference>
<dbReference type="RefSeq" id="XP_046799326.1">
    <property type="nucleotide sequence ID" value="XM_046943370.1"/>
</dbReference>
<dbReference type="SMR" id="P55164"/>
<dbReference type="FunCoup" id="P55164">
    <property type="interactions" value="17"/>
</dbReference>
<dbReference type="STRING" id="9031.ENSGALP00000018502"/>
<dbReference type="PaxDb" id="9031-ENSGALP00000018502"/>
<dbReference type="GeneID" id="373999"/>
<dbReference type="KEGG" id="gga:373999"/>
<dbReference type="CTD" id="1412"/>
<dbReference type="VEuPathDB" id="HostDB:geneid_373999"/>
<dbReference type="eggNOG" id="ENOG502QVIR">
    <property type="taxonomic scope" value="Eukaryota"/>
</dbReference>
<dbReference type="InParanoid" id="P55164"/>
<dbReference type="OMA" id="SDCANIA"/>
<dbReference type="OrthoDB" id="8688215at2759"/>
<dbReference type="PhylomeDB" id="P55164"/>
<dbReference type="PRO" id="PR:P55164"/>
<dbReference type="Proteomes" id="UP000000539">
    <property type="component" value="Unassembled WGS sequence"/>
</dbReference>
<dbReference type="GO" id="GO:0005212">
    <property type="term" value="F:structural constituent of eye lens"/>
    <property type="evidence" value="ECO:0000318"/>
    <property type="project" value="GO_Central"/>
</dbReference>
<dbReference type="GO" id="GO:0002088">
    <property type="term" value="P:lens development in camera-type eye"/>
    <property type="evidence" value="ECO:0000318"/>
    <property type="project" value="GO_Central"/>
</dbReference>
<dbReference type="GO" id="GO:0007601">
    <property type="term" value="P:visual perception"/>
    <property type="evidence" value="ECO:0000318"/>
    <property type="project" value="GO_Central"/>
</dbReference>
<dbReference type="FunFam" id="2.60.20.10:FF:000004">
    <property type="entry name" value="Crystallin beta A4"/>
    <property type="match status" value="1"/>
</dbReference>
<dbReference type="FunFam" id="2.60.20.10:FF:000002">
    <property type="entry name" value="Crystallin, beta B2"/>
    <property type="match status" value="1"/>
</dbReference>
<dbReference type="Gene3D" id="2.60.20.10">
    <property type="entry name" value="Crystallins"/>
    <property type="match status" value="2"/>
</dbReference>
<dbReference type="InterPro" id="IPR050252">
    <property type="entry name" value="Beta/Gamma-Crystallin"/>
</dbReference>
<dbReference type="InterPro" id="IPR001064">
    <property type="entry name" value="Beta/gamma_crystallin"/>
</dbReference>
<dbReference type="InterPro" id="IPR011024">
    <property type="entry name" value="G_crystallin-like"/>
</dbReference>
<dbReference type="PANTHER" id="PTHR11818:SF7">
    <property type="entry name" value="BETA-CRYSTALLIN A2"/>
    <property type="match status" value="1"/>
</dbReference>
<dbReference type="PANTHER" id="PTHR11818">
    <property type="entry name" value="BETA/GAMMA CRYSTALLIN"/>
    <property type="match status" value="1"/>
</dbReference>
<dbReference type="Pfam" id="PF00030">
    <property type="entry name" value="Crystall"/>
    <property type="match status" value="2"/>
</dbReference>
<dbReference type="PRINTS" id="PR01367">
    <property type="entry name" value="BGCRYSTALLIN"/>
</dbReference>
<dbReference type="SMART" id="SM00247">
    <property type="entry name" value="XTALbg"/>
    <property type="match status" value="2"/>
</dbReference>
<dbReference type="SUPFAM" id="SSF49695">
    <property type="entry name" value="gamma-Crystallin-like"/>
    <property type="match status" value="1"/>
</dbReference>
<dbReference type="PROSITE" id="PS50915">
    <property type="entry name" value="CRYSTALLIN_BETA_GAMMA"/>
    <property type="match status" value="4"/>
</dbReference>
<proteinExistence type="evidence at transcript level"/>
<reference key="1">
    <citation type="journal article" date="1996" name="Exp. Eye Res.">
        <title>Sequence and expression of chicken beta A2- and beta B3-crystallins.</title>
        <authorList>
            <person name="Duncan M.K."/>
            <person name="Banerjee-Basu S."/>
            <person name="McDermott J.B."/>
            <person name="Piatigorsky J."/>
        </authorList>
    </citation>
    <scope>NUCLEOTIDE SEQUENCE [MRNA]</scope>
    <source>
        <strain>White leghorn</strain>
        <tissue>Lens</tissue>
    </source>
</reference>
<gene>
    <name type="primary">CRYBA2</name>
</gene>
<evidence type="ECO:0000250" key="1"/>
<evidence type="ECO:0000255" key="2">
    <source>
        <dbReference type="PROSITE-ProRule" id="PRU00028"/>
    </source>
</evidence>
<evidence type="ECO:0000305" key="3"/>
<sequence length="196" mass="23004">MTSEAMDTLGQYKITVWEEESFQGKRCEFLMECPSIMERGFRKIRSIKVESGPWVGFEYPEYQGQQFILEKGDYPRWEAWSGNSGYRTEHLLSFRPVKCANHNDSKAILYEAENFQGHKFELSDDYPSLQAMGWGNKEVASIKVNAGAWVAYQYPGYRGYQYVLERDRQNGEFKKYSEYSSQAHTNQIQSIRRIQH</sequence>
<accession>P55164</accession>
<name>CRBA2_CHICK</name>